<sequence>MGQKVHPIGIRLGITKDWNARWYADSKNYSDFLISDIEIRKELNEKLKHASVSQINIERVANGVRVTIHTARPGVVIGKKGEDIEKLKQALIAKTGMPVNINIEEIKKPELDAKLVAEGIAQQLEKRIQFRRAMKRAVSNAMRLGAQGIKVNVSGRLNGAEIARAEWYREGRVPLHTLRADIDYATFEADTTYGKIGVKVWIFKGEKLEKISMVSDDKKQSKGKKGRK</sequence>
<protein>
    <recommendedName>
        <fullName evidence="1">Small ribosomal subunit protein uS3</fullName>
    </recommendedName>
    <alternativeName>
        <fullName evidence="2">30S ribosomal protein S3</fullName>
    </alternativeName>
</protein>
<evidence type="ECO:0000255" key="1">
    <source>
        <dbReference type="HAMAP-Rule" id="MF_01309"/>
    </source>
</evidence>
<evidence type="ECO:0000305" key="2"/>
<name>RS3_HYDCU</name>
<reference key="1">
    <citation type="journal article" date="2006" name="PLoS Biol.">
        <title>The genome of deep-sea vent chemolithoautotroph Thiomicrospira crunogena XCL-2.</title>
        <authorList>
            <person name="Scott K.M."/>
            <person name="Sievert S.M."/>
            <person name="Abril F.N."/>
            <person name="Ball L.A."/>
            <person name="Barrett C.J."/>
            <person name="Blake R.A."/>
            <person name="Boller A.J."/>
            <person name="Chain P.S.G."/>
            <person name="Clark J.A."/>
            <person name="Davis C.R."/>
            <person name="Detter C."/>
            <person name="Do K.F."/>
            <person name="Dobrinski K.P."/>
            <person name="Faza B.I."/>
            <person name="Fitzpatrick K.A."/>
            <person name="Freyermuth S.K."/>
            <person name="Harmer T.L."/>
            <person name="Hauser L.J."/>
            <person name="Huegler M."/>
            <person name="Kerfeld C.A."/>
            <person name="Klotz M.G."/>
            <person name="Kong W.W."/>
            <person name="Land M."/>
            <person name="Lapidus A."/>
            <person name="Larimer F.W."/>
            <person name="Longo D.L."/>
            <person name="Lucas S."/>
            <person name="Malfatti S.A."/>
            <person name="Massey S.E."/>
            <person name="Martin D.D."/>
            <person name="McCuddin Z."/>
            <person name="Meyer F."/>
            <person name="Moore J.L."/>
            <person name="Ocampo L.H. Jr."/>
            <person name="Paul J.H."/>
            <person name="Paulsen I.T."/>
            <person name="Reep D.K."/>
            <person name="Ren Q."/>
            <person name="Ross R.L."/>
            <person name="Sato P.Y."/>
            <person name="Thomas P."/>
            <person name="Tinkham L.E."/>
            <person name="Zeruth G.T."/>
        </authorList>
    </citation>
    <scope>NUCLEOTIDE SEQUENCE [LARGE SCALE GENOMIC DNA]</scope>
    <source>
        <strain>DSM 25203 / XCL-2</strain>
    </source>
</reference>
<gene>
    <name evidence="1" type="primary">rpsC</name>
    <name type="ordered locus">Tcr_0301</name>
</gene>
<keyword id="KW-0687">Ribonucleoprotein</keyword>
<keyword id="KW-0689">Ribosomal protein</keyword>
<keyword id="KW-0694">RNA-binding</keyword>
<keyword id="KW-0699">rRNA-binding</keyword>
<accession>Q31IX6</accession>
<organism>
    <name type="scientific">Hydrogenovibrio crunogenus (strain DSM 25203 / XCL-2)</name>
    <name type="common">Thiomicrospira crunogena</name>
    <dbReference type="NCBI Taxonomy" id="317025"/>
    <lineage>
        <taxon>Bacteria</taxon>
        <taxon>Pseudomonadati</taxon>
        <taxon>Pseudomonadota</taxon>
        <taxon>Gammaproteobacteria</taxon>
        <taxon>Thiotrichales</taxon>
        <taxon>Piscirickettsiaceae</taxon>
        <taxon>Hydrogenovibrio</taxon>
    </lineage>
</organism>
<feature type="chain" id="PRO_0000230738" description="Small ribosomal subunit protein uS3">
    <location>
        <begin position="1"/>
        <end position="228"/>
    </location>
</feature>
<feature type="domain" description="KH type-2" evidence="1">
    <location>
        <begin position="39"/>
        <end position="107"/>
    </location>
</feature>
<comment type="function">
    <text evidence="1">Binds the lower part of the 30S subunit head. Binds mRNA in the 70S ribosome, positioning it for translation.</text>
</comment>
<comment type="subunit">
    <text evidence="1">Part of the 30S ribosomal subunit. Forms a tight complex with proteins S10 and S14.</text>
</comment>
<comment type="similarity">
    <text evidence="1">Belongs to the universal ribosomal protein uS3 family.</text>
</comment>
<proteinExistence type="inferred from homology"/>
<dbReference type="EMBL" id="CP000109">
    <property type="protein sequence ID" value="ABB40897.1"/>
    <property type="molecule type" value="Genomic_DNA"/>
</dbReference>
<dbReference type="SMR" id="Q31IX6"/>
<dbReference type="STRING" id="317025.Tcr_0301"/>
<dbReference type="KEGG" id="tcx:Tcr_0301"/>
<dbReference type="eggNOG" id="COG0092">
    <property type="taxonomic scope" value="Bacteria"/>
</dbReference>
<dbReference type="HOGENOM" id="CLU_058591_0_2_6"/>
<dbReference type="OrthoDB" id="9806396at2"/>
<dbReference type="GO" id="GO:0022627">
    <property type="term" value="C:cytosolic small ribosomal subunit"/>
    <property type="evidence" value="ECO:0007669"/>
    <property type="project" value="TreeGrafter"/>
</dbReference>
<dbReference type="GO" id="GO:0003729">
    <property type="term" value="F:mRNA binding"/>
    <property type="evidence" value="ECO:0007669"/>
    <property type="project" value="UniProtKB-UniRule"/>
</dbReference>
<dbReference type="GO" id="GO:0019843">
    <property type="term" value="F:rRNA binding"/>
    <property type="evidence" value="ECO:0007669"/>
    <property type="project" value="UniProtKB-UniRule"/>
</dbReference>
<dbReference type="GO" id="GO:0003735">
    <property type="term" value="F:structural constituent of ribosome"/>
    <property type="evidence" value="ECO:0007669"/>
    <property type="project" value="InterPro"/>
</dbReference>
<dbReference type="GO" id="GO:0006412">
    <property type="term" value="P:translation"/>
    <property type="evidence" value="ECO:0007669"/>
    <property type="project" value="UniProtKB-UniRule"/>
</dbReference>
<dbReference type="CDD" id="cd02412">
    <property type="entry name" value="KH-II_30S_S3"/>
    <property type="match status" value="1"/>
</dbReference>
<dbReference type="FunFam" id="3.30.1140.32:FF:000001">
    <property type="entry name" value="30S ribosomal protein S3"/>
    <property type="match status" value="1"/>
</dbReference>
<dbReference type="FunFam" id="3.30.300.20:FF:000001">
    <property type="entry name" value="30S ribosomal protein S3"/>
    <property type="match status" value="1"/>
</dbReference>
<dbReference type="Gene3D" id="3.30.300.20">
    <property type="match status" value="1"/>
</dbReference>
<dbReference type="Gene3D" id="3.30.1140.32">
    <property type="entry name" value="Ribosomal protein S3, C-terminal domain"/>
    <property type="match status" value="1"/>
</dbReference>
<dbReference type="HAMAP" id="MF_01309_B">
    <property type="entry name" value="Ribosomal_uS3_B"/>
    <property type="match status" value="1"/>
</dbReference>
<dbReference type="InterPro" id="IPR004087">
    <property type="entry name" value="KH_dom"/>
</dbReference>
<dbReference type="InterPro" id="IPR015946">
    <property type="entry name" value="KH_dom-like_a/b"/>
</dbReference>
<dbReference type="InterPro" id="IPR004044">
    <property type="entry name" value="KH_dom_type_2"/>
</dbReference>
<dbReference type="InterPro" id="IPR009019">
    <property type="entry name" value="KH_sf_prok-type"/>
</dbReference>
<dbReference type="InterPro" id="IPR036419">
    <property type="entry name" value="Ribosomal_S3_C_sf"/>
</dbReference>
<dbReference type="InterPro" id="IPR005704">
    <property type="entry name" value="Ribosomal_uS3_bac-typ"/>
</dbReference>
<dbReference type="InterPro" id="IPR001351">
    <property type="entry name" value="Ribosomal_uS3_C"/>
</dbReference>
<dbReference type="InterPro" id="IPR018280">
    <property type="entry name" value="Ribosomal_uS3_CS"/>
</dbReference>
<dbReference type="NCBIfam" id="TIGR01009">
    <property type="entry name" value="rpsC_bact"/>
    <property type="match status" value="1"/>
</dbReference>
<dbReference type="PANTHER" id="PTHR11760">
    <property type="entry name" value="30S/40S RIBOSOMAL PROTEIN S3"/>
    <property type="match status" value="1"/>
</dbReference>
<dbReference type="PANTHER" id="PTHR11760:SF19">
    <property type="entry name" value="SMALL RIBOSOMAL SUBUNIT PROTEIN US3C"/>
    <property type="match status" value="1"/>
</dbReference>
<dbReference type="Pfam" id="PF07650">
    <property type="entry name" value="KH_2"/>
    <property type="match status" value="1"/>
</dbReference>
<dbReference type="Pfam" id="PF00189">
    <property type="entry name" value="Ribosomal_S3_C"/>
    <property type="match status" value="1"/>
</dbReference>
<dbReference type="SMART" id="SM00322">
    <property type="entry name" value="KH"/>
    <property type="match status" value="1"/>
</dbReference>
<dbReference type="SUPFAM" id="SSF54814">
    <property type="entry name" value="Prokaryotic type KH domain (KH-domain type II)"/>
    <property type="match status" value="1"/>
</dbReference>
<dbReference type="SUPFAM" id="SSF54821">
    <property type="entry name" value="Ribosomal protein S3 C-terminal domain"/>
    <property type="match status" value="1"/>
</dbReference>
<dbReference type="PROSITE" id="PS50823">
    <property type="entry name" value="KH_TYPE_2"/>
    <property type="match status" value="1"/>
</dbReference>
<dbReference type="PROSITE" id="PS00548">
    <property type="entry name" value="RIBOSOMAL_S3"/>
    <property type="match status" value="1"/>
</dbReference>